<proteinExistence type="evidence at protein level"/>
<protein>
    <recommendedName>
        <fullName>Limb region 1 protein homolog</fullName>
    </recommendedName>
    <alternativeName>
        <fullName>Differentiation-related gene 14 protein</fullName>
    </alternativeName>
</protein>
<organism>
    <name type="scientific">Homo sapiens</name>
    <name type="common">Human</name>
    <dbReference type="NCBI Taxonomy" id="9606"/>
    <lineage>
        <taxon>Eukaryota</taxon>
        <taxon>Metazoa</taxon>
        <taxon>Chordata</taxon>
        <taxon>Craniata</taxon>
        <taxon>Vertebrata</taxon>
        <taxon>Euteleostomi</taxon>
        <taxon>Mammalia</taxon>
        <taxon>Eutheria</taxon>
        <taxon>Euarchontoglires</taxon>
        <taxon>Primates</taxon>
        <taxon>Haplorrhini</taxon>
        <taxon>Catarrhini</taxon>
        <taxon>Hominidae</taxon>
        <taxon>Homo</taxon>
    </lineage>
</organism>
<feature type="chain" id="PRO_0000053906" description="Limb region 1 protein homolog">
    <location>
        <begin position="1"/>
        <end position="490"/>
    </location>
</feature>
<feature type="topological domain" description="Extracellular" evidence="2">
    <location>
        <begin position="1"/>
        <end position="19"/>
    </location>
</feature>
<feature type="transmembrane region" description="Helical" evidence="2">
    <location>
        <begin position="20"/>
        <end position="40"/>
    </location>
</feature>
<feature type="topological domain" description="Cytoplasmic" evidence="2">
    <location>
        <begin position="41"/>
        <end position="62"/>
    </location>
</feature>
<feature type="transmembrane region" description="Helical" evidence="2">
    <location>
        <begin position="63"/>
        <end position="83"/>
    </location>
</feature>
<feature type="topological domain" description="Extracellular" evidence="2">
    <location>
        <begin position="84"/>
        <end position="110"/>
    </location>
</feature>
<feature type="transmembrane region" description="Helical" evidence="2">
    <location>
        <begin position="111"/>
        <end position="131"/>
    </location>
</feature>
<feature type="topological domain" description="Cytoplasmic" evidence="2">
    <location>
        <begin position="132"/>
        <end position="151"/>
    </location>
</feature>
<feature type="transmembrane region" description="Helical" evidence="2">
    <location>
        <begin position="152"/>
        <end position="172"/>
    </location>
</feature>
<feature type="topological domain" description="Extracellular" evidence="2">
    <location>
        <begin position="173"/>
        <end position="187"/>
    </location>
</feature>
<feature type="transmembrane region" description="Helical" evidence="2">
    <location>
        <begin position="188"/>
        <end position="208"/>
    </location>
</feature>
<feature type="topological domain" description="Cytoplasmic" evidence="2">
    <location>
        <begin position="209"/>
        <end position="291"/>
    </location>
</feature>
<feature type="transmembrane region" description="Helical" evidence="2">
    <location>
        <begin position="292"/>
        <end position="312"/>
    </location>
</feature>
<feature type="topological domain" description="Extracellular" evidence="2">
    <location>
        <begin position="313"/>
        <end position="339"/>
    </location>
</feature>
<feature type="transmembrane region" description="Helical" evidence="2">
    <location>
        <begin position="340"/>
        <end position="360"/>
    </location>
</feature>
<feature type="topological domain" description="Cytoplasmic" evidence="2">
    <location>
        <begin position="361"/>
        <end position="383"/>
    </location>
</feature>
<feature type="transmembrane region" description="Helical" evidence="2">
    <location>
        <begin position="384"/>
        <end position="404"/>
    </location>
</feature>
<feature type="topological domain" description="Extracellular" evidence="2">
    <location>
        <begin position="405"/>
        <end position="426"/>
    </location>
</feature>
<feature type="transmembrane region" description="Helical" evidence="2">
    <location>
        <begin position="427"/>
        <end position="447"/>
    </location>
</feature>
<feature type="topological domain" description="Cytoplasmic" evidence="2">
    <location>
        <begin position="448"/>
        <end position="490"/>
    </location>
</feature>
<feature type="coiled-coil region" evidence="2">
    <location>
        <begin position="250"/>
        <end position="287"/>
    </location>
</feature>
<feature type="splice variant" id="VSP_016888" description="In isoform 2." evidence="11">
    <location>
        <begin position="205"/>
        <end position="466"/>
    </location>
</feature>
<feature type="splice variant" id="VSP_017441" description="In isoform 3." evidence="12">
    <original>NG</original>
    <variation>NVGMLCAGNPEVATGRQVPEEQAGQLLLGKWIQEGGDMIANPR</variation>
    <location>
        <begin position="252"/>
        <end position="253"/>
    </location>
</feature>
<feature type="sequence variant" id="VAR_031900" description="In dbSNP:rs6957768.">
    <original>T</original>
    <variation>A</variation>
    <location>
        <position position="228"/>
    </location>
</feature>
<feature type="sequence conflict" description="In Ref. 1; AAK94061." evidence="13" ref="1">
    <original>R</original>
    <variation>G</variation>
    <location>
        <position position="41"/>
    </location>
</feature>
<feature type="sequence conflict" description="In Ref. 1; AAK94061." evidence="13" ref="1">
    <original>L</original>
    <variation>S</variation>
    <location>
        <position position="76"/>
    </location>
</feature>
<feature type="sequence conflict" description="In Ref. 7; CAD39056." evidence="13" ref="7">
    <original>Y</original>
    <variation>C</variation>
    <location>
        <position position="96"/>
    </location>
</feature>
<feature type="sequence conflict" description="In Ref. 1; AAK94061." evidence="13" ref="1">
    <original>A</original>
    <variation>V</variation>
    <location>
        <position position="349"/>
    </location>
</feature>
<name>LMBR1_HUMAN</name>
<reference key="1">
    <citation type="submission" date="2001-07" db="EMBL/GenBank/DDBJ databases">
        <title>Cloning and expression analysis of leukemia cell line K562 differentiation-related gene DIF14.</title>
        <authorList>
            <person name="Wang Z."/>
            <person name="Huang G.-S."/>
        </authorList>
    </citation>
    <scope>NUCLEOTIDE SEQUENCE [MRNA] (ISOFORM 1)</scope>
    <source>
        <tissue>Leukemia</tissue>
    </source>
</reference>
<reference key="2">
    <citation type="journal article" date="2004" name="Nat. Genet.">
        <title>Complete sequencing and characterization of 21,243 full-length human cDNAs.</title>
        <authorList>
            <person name="Ota T."/>
            <person name="Suzuki Y."/>
            <person name="Nishikawa T."/>
            <person name="Otsuki T."/>
            <person name="Sugiyama T."/>
            <person name="Irie R."/>
            <person name="Wakamatsu A."/>
            <person name="Hayashi K."/>
            <person name="Sato H."/>
            <person name="Nagai K."/>
            <person name="Kimura K."/>
            <person name="Makita H."/>
            <person name="Sekine M."/>
            <person name="Obayashi M."/>
            <person name="Nishi T."/>
            <person name="Shibahara T."/>
            <person name="Tanaka T."/>
            <person name="Ishii S."/>
            <person name="Yamamoto J."/>
            <person name="Saito K."/>
            <person name="Kawai Y."/>
            <person name="Isono Y."/>
            <person name="Nakamura Y."/>
            <person name="Nagahari K."/>
            <person name="Murakami K."/>
            <person name="Yasuda T."/>
            <person name="Iwayanagi T."/>
            <person name="Wagatsuma M."/>
            <person name="Shiratori A."/>
            <person name="Sudo H."/>
            <person name="Hosoiri T."/>
            <person name="Kaku Y."/>
            <person name="Kodaira H."/>
            <person name="Kondo H."/>
            <person name="Sugawara M."/>
            <person name="Takahashi M."/>
            <person name="Kanda K."/>
            <person name="Yokoi T."/>
            <person name="Furuya T."/>
            <person name="Kikkawa E."/>
            <person name="Omura Y."/>
            <person name="Abe K."/>
            <person name="Kamihara K."/>
            <person name="Katsuta N."/>
            <person name="Sato K."/>
            <person name="Tanikawa M."/>
            <person name="Yamazaki M."/>
            <person name="Ninomiya K."/>
            <person name="Ishibashi T."/>
            <person name="Yamashita H."/>
            <person name="Murakawa K."/>
            <person name="Fujimori K."/>
            <person name="Tanai H."/>
            <person name="Kimata M."/>
            <person name="Watanabe M."/>
            <person name="Hiraoka S."/>
            <person name="Chiba Y."/>
            <person name="Ishida S."/>
            <person name="Ono Y."/>
            <person name="Takiguchi S."/>
            <person name="Watanabe S."/>
            <person name="Yosida M."/>
            <person name="Hotuta T."/>
            <person name="Kusano J."/>
            <person name="Kanehori K."/>
            <person name="Takahashi-Fujii A."/>
            <person name="Hara H."/>
            <person name="Tanase T.-O."/>
            <person name="Nomura Y."/>
            <person name="Togiya S."/>
            <person name="Komai F."/>
            <person name="Hara R."/>
            <person name="Takeuchi K."/>
            <person name="Arita M."/>
            <person name="Imose N."/>
            <person name="Musashino K."/>
            <person name="Yuuki H."/>
            <person name="Oshima A."/>
            <person name="Sasaki N."/>
            <person name="Aotsuka S."/>
            <person name="Yoshikawa Y."/>
            <person name="Matsunawa H."/>
            <person name="Ichihara T."/>
            <person name="Shiohata N."/>
            <person name="Sano S."/>
            <person name="Moriya S."/>
            <person name="Momiyama H."/>
            <person name="Satoh N."/>
            <person name="Takami S."/>
            <person name="Terashima Y."/>
            <person name="Suzuki O."/>
            <person name="Nakagawa S."/>
            <person name="Senoh A."/>
            <person name="Mizoguchi H."/>
            <person name="Goto Y."/>
            <person name="Shimizu F."/>
            <person name="Wakebe H."/>
            <person name="Hishigaki H."/>
            <person name="Watanabe T."/>
            <person name="Sugiyama A."/>
            <person name="Takemoto M."/>
            <person name="Kawakami B."/>
            <person name="Yamazaki M."/>
            <person name="Watanabe K."/>
            <person name="Kumagai A."/>
            <person name="Itakura S."/>
            <person name="Fukuzumi Y."/>
            <person name="Fujimori Y."/>
            <person name="Komiyama M."/>
            <person name="Tashiro H."/>
            <person name="Tanigami A."/>
            <person name="Fujiwara T."/>
            <person name="Ono T."/>
            <person name="Yamada K."/>
            <person name="Fujii Y."/>
            <person name="Ozaki K."/>
            <person name="Hirao M."/>
            <person name="Ohmori Y."/>
            <person name="Kawabata A."/>
            <person name="Hikiji T."/>
            <person name="Kobatake N."/>
            <person name="Inagaki H."/>
            <person name="Ikema Y."/>
            <person name="Okamoto S."/>
            <person name="Okitani R."/>
            <person name="Kawakami T."/>
            <person name="Noguchi S."/>
            <person name="Itoh T."/>
            <person name="Shigeta K."/>
            <person name="Senba T."/>
            <person name="Matsumura K."/>
            <person name="Nakajima Y."/>
            <person name="Mizuno T."/>
            <person name="Morinaga M."/>
            <person name="Sasaki M."/>
            <person name="Togashi T."/>
            <person name="Oyama M."/>
            <person name="Hata H."/>
            <person name="Watanabe M."/>
            <person name="Komatsu T."/>
            <person name="Mizushima-Sugano J."/>
            <person name="Satoh T."/>
            <person name="Shirai Y."/>
            <person name="Takahashi Y."/>
            <person name="Nakagawa K."/>
            <person name="Okumura K."/>
            <person name="Nagase T."/>
            <person name="Nomura N."/>
            <person name="Kikuchi H."/>
            <person name="Masuho Y."/>
            <person name="Yamashita R."/>
            <person name="Nakai K."/>
            <person name="Yada T."/>
            <person name="Nakamura Y."/>
            <person name="Ohara O."/>
            <person name="Isogai T."/>
            <person name="Sugano S."/>
        </authorList>
    </citation>
    <scope>NUCLEOTIDE SEQUENCE [LARGE SCALE MRNA] (ISOFORM 2)</scope>
    <scope>NUCLEOTIDE SEQUENCE [LARGE SCALE MRNA] OF 356-490 (ISOFORM 1)</scope>
    <source>
        <tissue>Embryo</tissue>
        <tissue>Hepatoma</tissue>
    </source>
</reference>
<reference key="3">
    <citation type="journal article" date="2003" name="Science">
        <title>Human chromosome 7: DNA sequence and biology.</title>
        <authorList>
            <person name="Scherer S.W."/>
            <person name="Cheung J."/>
            <person name="MacDonald J.R."/>
            <person name="Osborne L.R."/>
            <person name="Nakabayashi K."/>
            <person name="Herbrick J.-A."/>
            <person name="Carson A.R."/>
            <person name="Parker-Katiraee L."/>
            <person name="Skaug J."/>
            <person name="Khaja R."/>
            <person name="Zhang J."/>
            <person name="Hudek A.K."/>
            <person name="Li M."/>
            <person name="Haddad M."/>
            <person name="Duggan G.E."/>
            <person name="Fernandez B.A."/>
            <person name="Kanematsu E."/>
            <person name="Gentles S."/>
            <person name="Christopoulos C.C."/>
            <person name="Choufani S."/>
            <person name="Kwasnicka D."/>
            <person name="Zheng X.H."/>
            <person name="Lai Z."/>
            <person name="Nusskern D.R."/>
            <person name="Zhang Q."/>
            <person name="Gu Z."/>
            <person name="Lu F."/>
            <person name="Zeesman S."/>
            <person name="Nowaczyk M.J."/>
            <person name="Teshima I."/>
            <person name="Chitayat D."/>
            <person name="Shuman C."/>
            <person name="Weksberg R."/>
            <person name="Zackai E.H."/>
            <person name="Grebe T.A."/>
            <person name="Cox S.R."/>
            <person name="Kirkpatrick S.J."/>
            <person name="Rahman N."/>
            <person name="Friedman J.M."/>
            <person name="Heng H.H.Q."/>
            <person name="Pelicci P.G."/>
            <person name="Lo-Coco F."/>
            <person name="Belloni E."/>
            <person name="Shaffer L.G."/>
            <person name="Pober B."/>
            <person name="Morton C.C."/>
            <person name="Gusella J.F."/>
            <person name="Bruns G.A.P."/>
            <person name="Korf B.R."/>
            <person name="Quade B.J."/>
            <person name="Ligon A.H."/>
            <person name="Ferguson H."/>
            <person name="Higgins A.W."/>
            <person name="Leach N.T."/>
            <person name="Herrick S.R."/>
            <person name="Lemyre E."/>
            <person name="Farra C.G."/>
            <person name="Kim H.-G."/>
            <person name="Summers A.M."/>
            <person name="Gripp K.W."/>
            <person name="Roberts W."/>
            <person name="Szatmari P."/>
            <person name="Winsor E.J.T."/>
            <person name="Grzeschik K.-H."/>
            <person name="Teebi A."/>
            <person name="Minassian B.A."/>
            <person name="Kere J."/>
            <person name="Armengol L."/>
            <person name="Pujana M.A."/>
            <person name="Estivill X."/>
            <person name="Wilson M.D."/>
            <person name="Koop B.F."/>
            <person name="Tosi S."/>
            <person name="Moore G.E."/>
            <person name="Boright A.P."/>
            <person name="Zlotorynski E."/>
            <person name="Kerem B."/>
            <person name="Kroisel P.M."/>
            <person name="Petek E."/>
            <person name="Oscier D.G."/>
            <person name="Mould S.J."/>
            <person name="Doehner H."/>
            <person name="Doehner K."/>
            <person name="Rommens J.M."/>
            <person name="Vincent J.B."/>
            <person name="Venter J.C."/>
            <person name="Li P.W."/>
            <person name="Mural R.J."/>
            <person name="Adams M.D."/>
            <person name="Tsui L.-C."/>
        </authorList>
    </citation>
    <scope>NUCLEOTIDE SEQUENCE [LARGE SCALE GENOMIC DNA]</scope>
</reference>
<reference key="4">
    <citation type="submission" date="2005-07" db="EMBL/GenBank/DDBJ databases">
        <authorList>
            <person name="Mural R.J."/>
            <person name="Istrail S."/>
            <person name="Sutton G.G."/>
            <person name="Florea L."/>
            <person name="Halpern A.L."/>
            <person name="Mobarry C.M."/>
            <person name="Lippert R."/>
            <person name="Walenz B."/>
            <person name="Shatkay H."/>
            <person name="Dew I."/>
            <person name="Miller J.R."/>
            <person name="Flanigan M.J."/>
            <person name="Edwards N.J."/>
            <person name="Bolanos R."/>
            <person name="Fasulo D."/>
            <person name="Halldorsson B.V."/>
            <person name="Hannenhalli S."/>
            <person name="Turner R."/>
            <person name="Yooseph S."/>
            <person name="Lu F."/>
            <person name="Nusskern D.R."/>
            <person name="Shue B.C."/>
            <person name="Zheng X.H."/>
            <person name="Zhong F."/>
            <person name="Delcher A.L."/>
            <person name="Huson D.H."/>
            <person name="Kravitz S.A."/>
            <person name="Mouchard L."/>
            <person name="Reinert K."/>
            <person name="Remington K.A."/>
            <person name="Clark A.G."/>
            <person name="Waterman M.S."/>
            <person name="Eichler E.E."/>
            <person name="Adams M.D."/>
            <person name="Hunkapiller M.W."/>
            <person name="Myers E.W."/>
            <person name="Venter J.C."/>
        </authorList>
    </citation>
    <scope>NUCLEOTIDE SEQUENCE [LARGE SCALE GENOMIC DNA]</scope>
</reference>
<reference key="5">
    <citation type="journal article" date="2003" name="Nature">
        <title>The DNA sequence of human chromosome 7.</title>
        <authorList>
            <person name="Hillier L.W."/>
            <person name="Fulton R.S."/>
            <person name="Fulton L.A."/>
            <person name="Graves T.A."/>
            <person name="Pepin K.H."/>
            <person name="Wagner-McPherson C."/>
            <person name="Layman D."/>
            <person name="Maas J."/>
            <person name="Jaeger S."/>
            <person name="Walker R."/>
            <person name="Wylie K."/>
            <person name="Sekhon M."/>
            <person name="Becker M.C."/>
            <person name="O'Laughlin M.D."/>
            <person name="Schaller M.E."/>
            <person name="Fewell G.A."/>
            <person name="Delehaunty K.D."/>
            <person name="Miner T.L."/>
            <person name="Nash W.E."/>
            <person name="Cordes M."/>
            <person name="Du H."/>
            <person name="Sun H."/>
            <person name="Edwards J."/>
            <person name="Bradshaw-Cordum H."/>
            <person name="Ali J."/>
            <person name="Andrews S."/>
            <person name="Isak A."/>
            <person name="Vanbrunt A."/>
            <person name="Nguyen C."/>
            <person name="Du F."/>
            <person name="Lamar B."/>
            <person name="Courtney L."/>
            <person name="Kalicki J."/>
            <person name="Ozersky P."/>
            <person name="Bielicki L."/>
            <person name="Scott K."/>
            <person name="Holmes A."/>
            <person name="Harkins R."/>
            <person name="Harris A."/>
            <person name="Strong C.M."/>
            <person name="Hou S."/>
            <person name="Tomlinson C."/>
            <person name="Dauphin-Kohlberg S."/>
            <person name="Kozlowicz-Reilly A."/>
            <person name="Leonard S."/>
            <person name="Rohlfing T."/>
            <person name="Rock S.M."/>
            <person name="Tin-Wollam A.-M."/>
            <person name="Abbott A."/>
            <person name="Minx P."/>
            <person name="Maupin R."/>
            <person name="Strowmatt C."/>
            <person name="Latreille P."/>
            <person name="Miller N."/>
            <person name="Johnson D."/>
            <person name="Murray J."/>
            <person name="Woessner J.P."/>
            <person name="Wendl M.C."/>
            <person name="Yang S.-P."/>
            <person name="Schultz B.R."/>
            <person name="Wallis J.W."/>
            <person name="Spieth J."/>
            <person name="Bieri T.A."/>
            <person name="Nelson J.O."/>
            <person name="Berkowicz N."/>
            <person name="Wohldmann P.E."/>
            <person name="Cook L.L."/>
            <person name="Hickenbotham M.T."/>
            <person name="Eldred J."/>
            <person name="Williams D."/>
            <person name="Bedell J.A."/>
            <person name="Mardis E.R."/>
            <person name="Clifton S.W."/>
            <person name="Chissoe S.L."/>
            <person name="Marra M.A."/>
            <person name="Raymond C."/>
            <person name="Haugen E."/>
            <person name="Gillett W."/>
            <person name="Zhou Y."/>
            <person name="James R."/>
            <person name="Phelps K."/>
            <person name="Iadanoto S."/>
            <person name="Bubb K."/>
            <person name="Simms E."/>
            <person name="Levy R."/>
            <person name="Clendenning J."/>
            <person name="Kaul R."/>
            <person name="Kent W.J."/>
            <person name="Furey T.S."/>
            <person name="Baertsch R.A."/>
            <person name="Brent M.R."/>
            <person name="Keibler E."/>
            <person name="Flicek P."/>
            <person name="Bork P."/>
            <person name="Suyama M."/>
            <person name="Bailey J.A."/>
            <person name="Portnoy M.E."/>
            <person name="Torrents D."/>
            <person name="Chinwalla A.T."/>
            <person name="Gish W.R."/>
            <person name="Eddy S.R."/>
            <person name="McPherson J.D."/>
            <person name="Olson M.V."/>
            <person name="Eichler E.E."/>
            <person name="Green E.D."/>
            <person name="Waterston R.H."/>
            <person name="Wilson R.K."/>
        </authorList>
    </citation>
    <scope>NUCLEOTIDE SEQUENCE [LARGE SCALE GENOMIC DNA]</scope>
</reference>
<reference key="6">
    <citation type="journal article" date="2004" name="Genome Res.">
        <title>The status, quality, and expansion of the NIH full-length cDNA project: the Mammalian Gene Collection (MGC).</title>
        <authorList>
            <consortium name="The MGC Project Team"/>
        </authorList>
    </citation>
    <scope>NUCLEOTIDE SEQUENCE [LARGE SCALE MRNA] (ISOFORM 1)</scope>
    <source>
        <tissue>Lung</tissue>
    </source>
</reference>
<reference key="7">
    <citation type="journal article" date="2007" name="BMC Genomics">
        <title>The full-ORF clone resource of the German cDNA consortium.</title>
        <authorList>
            <person name="Bechtel S."/>
            <person name="Rosenfelder H."/>
            <person name="Duda A."/>
            <person name="Schmidt C.P."/>
            <person name="Ernst U."/>
            <person name="Wellenreuther R."/>
            <person name="Mehrle A."/>
            <person name="Schuster C."/>
            <person name="Bahr A."/>
            <person name="Bloecker H."/>
            <person name="Heubner D."/>
            <person name="Hoerlein A."/>
            <person name="Michel G."/>
            <person name="Wedler H."/>
            <person name="Koehrer K."/>
            <person name="Ottenwaelder B."/>
            <person name="Poustka A."/>
            <person name="Wiemann S."/>
            <person name="Schupp I."/>
        </authorList>
    </citation>
    <scope>NUCLEOTIDE SEQUENCE [LARGE SCALE MRNA] OF 3-490 (ISOFORM 3)</scope>
    <source>
        <tissue>Amygdala</tissue>
    </source>
</reference>
<reference key="8">
    <citation type="journal article" date="1999" name="Genomics">
        <title>A physical and transcriptional map of the preaxial polydactyly locus on chromosome 7q36.</title>
        <authorList>
            <person name="Heus H.C."/>
            <person name="Hing A."/>
            <person name="van Baren M.J."/>
            <person name="Joosse M."/>
            <person name="Breedveld G.J."/>
            <person name="Wang J.C."/>
            <person name="Burgess A."/>
            <person name="Donnis-Keller H."/>
            <person name="Berglund C."/>
            <person name="Zguricas J."/>
            <person name="Scherer S.W."/>
            <person name="Rommens J.M."/>
            <person name="Oostra B.A."/>
            <person name="Heutink P."/>
        </authorList>
    </citation>
    <scope>TISSUE SPECIFICITY</scope>
</reference>
<reference key="9">
    <citation type="journal article" date="2001" name="Am. J. Hum. Genet.">
        <title>Acheiropodia is caused by a genomic deletion in C7orf2, the human orthologue of the Lmbr1 gene.</title>
        <authorList>
            <person name="Ianakiev P."/>
            <person name="van Baren M.J."/>
            <person name="Daly M.J."/>
            <person name="Toledo S.P."/>
            <person name="Cavalcanti M.G."/>
            <person name="Neto J.C."/>
            <person name="Silveira E.L."/>
            <person name="Freire-Maia A."/>
            <person name="Heutink P."/>
            <person name="Kilpatrick M.W."/>
            <person name="Tsipouras P."/>
        </authorList>
    </citation>
    <scope>INVOLVEMENT IN ACHP</scope>
</reference>
<reference key="10">
    <citation type="journal article" date="2003" name="Hum. Mol. Genet.">
        <title>A long-range Shh enhancer regulates expression in the developing limb and fin and is associated with preaxial polydactyly.</title>
        <authorList>
            <person name="Lettice L.A."/>
            <person name="Heaney S.J.H."/>
            <person name="Purdie L.A."/>
            <person name="Li L."/>
            <person name="de Beer P."/>
            <person name="Oostra B.A."/>
            <person name="Goode D."/>
            <person name="Elgar G."/>
            <person name="Hill R.E."/>
            <person name="de Graaff E."/>
        </authorList>
    </citation>
    <scope>INVOLVEMENT IN PPD2 AND TPTPS</scope>
</reference>
<reference key="11">
    <citation type="journal article" date="2008" name="J. Med. Genet.">
        <title>Triphalangeal thumb-polysyndactyly syndrome and syndactyly type IV are caused by genomic duplications involving the long range, limb-specific SHH enhancer.</title>
        <authorList>
            <person name="Sun M."/>
            <person name="Ma F."/>
            <person name="Zeng X."/>
            <person name="Liu Q."/>
            <person name="Zhao X.-L."/>
            <person name="Wu F.-X."/>
            <person name="Wu G.-P."/>
            <person name="Zhang Z.-F."/>
            <person name="Gu B."/>
            <person name="Zhao Y.-F."/>
            <person name="Tian S.-H."/>
            <person name="Lin B."/>
            <person name="Kong X.-Y."/>
            <person name="Zhang X.-L."/>
            <person name="Yang W."/>
            <person name="Lo W.H.-Y."/>
            <person name="Zhang X."/>
        </authorList>
    </citation>
    <scope>INVOLVEMENT IN SDTY4 AND TPTPS</scope>
</reference>
<reference key="12">
    <citation type="journal article" date="2010" name="Hum. Mutat.">
        <title>A specific mutation in the distant sonic hedgehog (SHH) cis-regulator (ZRS) causes Werner mesomelic syndrome (WMS) while complete ZRS duplications underlie Haas type polysyndactyly and preaxial polydactyly (PPD) with or without triphalangeal thumb.</title>
        <authorList>
            <person name="Wieczorek D."/>
            <person name="Pawlik B."/>
            <person name="Li Y."/>
            <person name="Akarsu N.A."/>
            <person name="Caliebe A."/>
            <person name="May K.J."/>
            <person name="Schweiger B."/>
            <person name="Vargas F.R."/>
            <person name="Balci S."/>
            <person name="Gillessen-Kaesbach G."/>
            <person name="Wollnik B."/>
        </authorList>
    </citation>
    <scope>INVOLVEMENT IN THYP</scope>
</reference>
<reference key="13">
    <citation type="journal article" date="2012" name="Proc. Natl. Acad. Sci. U.S.A.">
        <title>N-terminal acetylome analyses and functional insights of the N-terminal acetyltransferase NatB.</title>
        <authorList>
            <person name="Van Damme P."/>
            <person name="Lasa M."/>
            <person name="Polevoda B."/>
            <person name="Gazquez C."/>
            <person name="Elosegui-Artola A."/>
            <person name="Kim D.S."/>
            <person name="De Juan-Pardo E."/>
            <person name="Demeyer K."/>
            <person name="Hole K."/>
            <person name="Larrea E."/>
            <person name="Timmerman E."/>
            <person name="Prieto J."/>
            <person name="Arnesen T."/>
            <person name="Sherman F."/>
            <person name="Gevaert K."/>
            <person name="Aldabe R."/>
        </authorList>
    </citation>
    <scope>IDENTIFICATION BY MASS SPECTROMETRY [LARGE SCALE ANALYSIS]</scope>
</reference>
<reference key="14">
    <citation type="journal article" date="2014" name="Clin. Genet.">
        <title>Microduplications encompassing the Sonic hedgehog limb enhancer ZRS are associated with Haas-type polysyndactyly and Laurin-Sandrow syndrome.</title>
        <authorList>
            <person name="Lohan S."/>
            <person name="Spielmann M."/>
            <person name="Doelken S.C."/>
            <person name="Floettmann R."/>
            <person name="Muhammad F."/>
            <person name="Baig S.M."/>
            <person name="Wajid M."/>
            <person name="Huelsemann W."/>
            <person name="Habenicht R."/>
            <person name="Kjaer K.W."/>
            <person name="Patil S.J."/>
            <person name="Girisha K.M."/>
            <person name="Abarca-Barriga H.H."/>
            <person name="Mundlos S."/>
            <person name="Klopocki E."/>
        </authorList>
    </citation>
    <scope>INVOLVEMENT IN SDTY4 AND LSS</scope>
</reference>
<reference key="15">
    <citation type="journal article" date="2014" name="J. Hum. Genet.">
        <title>ZRS 406A&gt;G mutation in patients with tibial hypoplasia, polydactyly and triphalangeal first fingers.</title>
        <authorList>
            <person name="Norbnop P."/>
            <person name="Srichomthong C."/>
            <person name="Suphapeetiporn K."/>
            <person name="Shotelersuk V."/>
        </authorList>
    </citation>
    <scope>INVOLVEMENT IN THYP</scope>
</reference>
<reference key="16">
    <citation type="journal article" date="2014" name="Hum. Mutat.">
        <title>A novel ZRS mutation leads to preaxial polydactyly type 2 in a heterozygous form and Werner mesomelic syndrome in a homozygous form.</title>
        <authorList>
            <person name="VanderMeer J.E."/>
            <person name="Lozano R."/>
            <person name="Sun M."/>
            <person name="Xue Y."/>
            <person name="Daentl D."/>
            <person name="Jabs E.W."/>
            <person name="Wilcox W.R."/>
            <person name="Ahituv N."/>
        </authorList>
    </citation>
    <scope>INVOLVEMENT IN THYP</scope>
</reference>
<comment type="function">
    <text>Putative membrane receptor.</text>
</comment>
<comment type="interaction">
    <interactant intactId="EBI-6138627">
        <id>Q8WVP7</id>
    </interactant>
    <interactant intactId="EBI-750776">
        <id>O95214</id>
        <label>LEPROTL1</label>
    </interactant>
    <organismsDiffer>false</organismsDiffer>
    <experiments>3</experiments>
</comment>
<comment type="subcellular location">
    <subcellularLocation>
        <location evidence="1">Membrane</location>
        <topology evidence="1">Multi-pass membrane protein</topology>
    </subcellularLocation>
</comment>
<comment type="alternative products">
    <event type="alternative splicing"/>
    <isoform>
        <id>Q8WVP7-1</id>
        <name>1</name>
        <sequence type="displayed"/>
    </isoform>
    <isoform>
        <id>Q8WVP7-2</id>
        <name>2</name>
        <sequence type="described" ref="VSP_016888"/>
    </isoform>
    <isoform>
        <id>Q8WVP7-3</id>
        <name>3</name>
        <sequence type="described" ref="VSP_017441"/>
    </isoform>
</comment>
<comment type="tissue specificity">
    <text evidence="3">Widely expressed with strongest expression in heart and pancreas.</text>
</comment>
<comment type="disease" evidence="5">
    <disease id="DI-03095">
        <name>Preaxial polydactyly 2</name>
        <acronym>PPD2</acronym>
        <description>Polydactyly consists of duplication of the distal phalanx. The thumb in PPD2 is usually opposable and possesses a normal metacarpal.</description>
        <dbReference type="MIM" id="174500"/>
    </disease>
    <text evidence="5">The disease is caused by variants affecting the gene represented in this entry. Disease-causing mutations are located in intron 5 of LMBR1. The mutations do not alter normal LMBR1 expression and function, but disrupt a long-range, cis-regulatory element of SHH expression contained in LMBR1 intron 5, known as ZPA regulatory sequence (ZRS).</text>
</comment>
<comment type="disease" evidence="5 6">
    <disease id="DI-02391">
        <name>Triphalangeal thumb with polysyndactyly</name>
        <acronym>TPTPS</acronym>
        <description>Autosomal dominant syndrome. It is characterized by a wide spectrum of pre- and post-axial abnormalities due to altered SHH expression pattern during limb development.</description>
        <dbReference type="MIM" id="190605"/>
    </disease>
    <text>The gene represented in this entry is involved in disease pathogenesis. Mutations located in intron 5 of LMBR1 disrupt a long-range, cis-regulatory element of SHH expression.</text>
</comment>
<comment type="disease" evidence="4">
    <disease id="DI-01165">
        <name>Acheiropody</name>
        <acronym>ACHP</acronym>
        <description>Very rare condition characterized by bilateral congenital amputations of the hands and feet. The specific malformative phenotype consists of a complete amputation of the distal epiphysis of the humerus, amputation of the tibial diaphysis and aplasia of the radius, ulna, fibula and of all the bones of the hands and feet.</description>
        <dbReference type="MIM" id="200500"/>
    </disease>
    <text>The disease is caused by variants affecting the gene represented in this entry.</text>
</comment>
<comment type="disease" evidence="6 8">
    <disease id="DI-02353">
        <name>Syndactyly 4</name>
        <acronym>SDTY4</acronym>
        <description>A form of syndactyly, a congenital anomaly of the hand or foot marked by persistence of the webbing between adjacent digits that are more or less completely attached. SDTY4 is characterized by complete bilateral syndactyly (involving all digits 1 to 5). A frequent association with polydactyly (with six metacarpals and six digits) has been reported. Feet are affected occasionally.</description>
        <dbReference type="MIM" id="186200"/>
    </disease>
    <text evidence="8">The disease is caused by variants affecting the gene represented in this entry. Disease-causing mutations consists of duplications (89-589 kb) involving the ZPA regulatory sequence (ZRS), a SHH long-range cis-regulatory element, located in LMBR1 intron 5. The mutations do not alter normal LMBR1 expression and function, but affect SHH limb expression.</text>
</comment>
<comment type="disease" evidence="7 9 10">
    <disease id="DI-04241">
        <name>Hypoplasia or aplasia of tibia with polydactyly</name>
        <acronym>THYP</acronym>
        <description>An autosomal dominant disease characterized by hypoplastic or absent tibia, and polydactyly.</description>
        <dbReference type="MIM" id="188740"/>
    </disease>
    <text evidence="7 9 10">The disease is caused by variants affecting the gene represented in this entry. Disease-causing mutations are located in intron 5 of LMBR1. The mutations do not alter normal LMBR1 expression and function, but disrupt a long-range, cis-regulatory element of SHH expression contained in LMBR1 intron 5.</text>
</comment>
<comment type="disease" evidence="8">
    <disease id="DI-04275">
        <name>Laurin-Sandrow syndrome</name>
        <acronym>LSS</acronym>
        <description>A rare autosomal dominant disorder characterized by polysyndactyly of hands and/or feet, mirror image duplication of the feet, nasal defects, and loss of identity between fibula and tibia. Some patients do not have nasal abnormalities (segmental Laurin-Sandrow syndrome).</description>
        <dbReference type="MIM" id="135750"/>
    </disease>
    <text evidence="8">The disease is caused by variants affecting the gene represented in this entry. Disease-causing mutations consists of duplications (16-75 kb) involving the ZPA regulatory sequence (ZRS), a SHH long-range cis-regulatory element, located in LMBR1 intron 5. The mutations do not alter normal LMBR1 expression and function, but affect SHH limb expression.</text>
</comment>
<comment type="similarity">
    <text evidence="13">Belongs to the LIMR family.</text>
</comment>
<comment type="sequence caution" evidence="13">
    <conflict type="erroneous initiation">
        <sequence resource="EMBL-CDS" id="AAD43188"/>
    </conflict>
</comment>
<comment type="sequence caution" evidence="13">
    <conflict type="erroneous initiation">
        <sequence resource="EMBL-CDS" id="AAK31345"/>
    </conflict>
</comment>
<comment type="sequence caution" evidence="13">
    <conflict type="erroneous initiation">
        <sequence resource="EMBL-CDS" id="BAB15595"/>
    </conflict>
</comment>
<gene>
    <name type="primary">LMBR1</name>
    <name type="synonym">C7orf2</name>
    <name type="synonym">DIF14</name>
</gene>
<accession>Q8WVP7</accession>
<accession>A4D242</accession>
<accession>Q8N3E3</accession>
<accession>Q96QZ5</accession>
<accession>Q9H5N0</accession>
<accession>Q9HAG9</accession>
<accession>Q9UDN5</accession>
<accession>Q9Y6U2</accession>
<keyword id="KW-0025">Alternative splicing</keyword>
<keyword id="KW-0175">Coiled coil</keyword>
<keyword id="KW-0472">Membrane</keyword>
<keyword id="KW-1267">Proteomics identification</keyword>
<keyword id="KW-0675">Receptor</keyword>
<keyword id="KW-1185">Reference proteome</keyword>
<keyword id="KW-0812">Transmembrane</keyword>
<keyword id="KW-1133">Transmembrane helix</keyword>
<sequence length="490" mass="55098">MEGQDEVSAREQHFHSQVRESTICFLLFAILYVVSYFIITRYKRKSDEQEDEDAIVNRISLFLSTFTLAVSAGAVLLLPFSIISNEILLSFPQNYYIQWLNGSLIHGLWNLASLFSNLCLFVLMPFAFFFLESEGFAGLKKGIRARILETLVMLLLLALLILGIVWVASALIDNDAASMESLYDLWEFYLPYLYSCISLMGCLLLLLCTPVGLSRMFTVMGQLLVKPTILEDLDEQIYIITLEEEALQRRLNGLSSSVEYNIMELEQELENVKTLKTKLERRKKASAWERNLVYPAVMVLLLIETSISVLLVACNILCLLVDETAMPKGTRGPGIGNASLSTFGFVGAALEIILIFYLMVSSVVGFYSLRFFGNFTPKKDDTTMTKIIGNCVSILVLSSALPVMSRTLGITRFDLLGDFGRFNWLGNFYIVLSYNLLFAIVTTLCLVRKFTSAVREELFKALGLHKLHLPNTSRDSETAKPSVNGHQKAL</sequence>
<evidence type="ECO:0000250" key="1"/>
<evidence type="ECO:0000255" key="2"/>
<evidence type="ECO:0000269" key="3">
    <source>
    </source>
</evidence>
<evidence type="ECO:0000269" key="4">
    <source>
    </source>
</evidence>
<evidence type="ECO:0000269" key="5">
    <source>
    </source>
</evidence>
<evidence type="ECO:0000269" key="6">
    <source>
    </source>
</evidence>
<evidence type="ECO:0000269" key="7">
    <source>
    </source>
</evidence>
<evidence type="ECO:0000269" key="8">
    <source>
    </source>
</evidence>
<evidence type="ECO:0000269" key="9">
    <source>
    </source>
</evidence>
<evidence type="ECO:0000269" key="10">
    <source>
    </source>
</evidence>
<evidence type="ECO:0000303" key="11">
    <source>
    </source>
</evidence>
<evidence type="ECO:0000303" key="12">
    <source>
    </source>
</evidence>
<evidence type="ECO:0000305" key="13"/>
<dbReference type="EMBL" id="AF348513">
    <property type="protein sequence ID" value="AAK31345.1"/>
    <property type="status" value="ALT_INIT"/>
    <property type="molecule type" value="mRNA"/>
</dbReference>
<dbReference type="EMBL" id="AF402318">
    <property type="protein sequence ID" value="AAK94061.1"/>
    <property type="molecule type" value="mRNA"/>
</dbReference>
<dbReference type="EMBL" id="AK021727">
    <property type="protein sequence ID" value="BAB13880.1"/>
    <property type="molecule type" value="mRNA"/>
</dbReference>
<dbReference type="EMBL" id="AK026940">
    <property type="protein sequence ID" value="BAB15595.1"/>
    <property type="status" value="ALT_INIT"/>
    <property type="molecule type" value="mRNA"/>
</dbReference>
<dbReference type="EMBL" id="AC005534">
    <property type="protein sequence ID" value="AAD43188.1"/>
    <property type="status" value="ALT_INIT"/>
    <property type="molecule type" value="Genomic_DNA"/>
</dbReference>
<dbReference type="EMBL" id="AC007075">
    <property type="protein sequence ID" value="AAF03516.1"/>
    <property type="molecule type" value="Genomic_DNA"/>
</dbReference>
<dbReference type="EMBL" id="AC007097">
    <property type="status" value="NOT_ANNOTATED_CDS"/>
    <property type="molecule type" value="Genomic_DNA"/>
</dbReference>
<dbReference type="EMBL" id="CH236954">
    <property type="protein sequence ID" value="EAL23920.1"/>
    <property type="molecule type" value="Genomic_DNA"/>
</dbReference>
<dbReference type="EMBL" id="CH471149">
    <property type="protein sequence ID" value="EAX04559.1"/>
    <property type="molecule type" value="Genomic_DNA"/>
</dbReference>
<dbReference type="EMBL" id="BC017663">
    <property type="protein sequence ID" value="AAH17663.1"/>
    <property type="molecule type" value="mRNA"/>
</dbReference>
<dbReference type="EMBL" id="AL834394">
    <property type="protein sequence ID" value="CAD39056.1"/>
    <property type="molecule type" value="mRNA"/>
</dbReference>
<dbReference type="CCDS" id="CCDS5945.1">
    <molecule id="Q8WVP7-1"/>
</dbReference>
<dbReference type="RefSeq" id="NP_001337882.1">
    <molecule id="Q8WVP7-3"/>
    <property type="nucleotide sequence ID" value="NM_001350953.2"/>
</dbReference>
<dbReference type="RefSeq" id="NP_071903.2">
    <molecule id="Q8WVP7-1"/>
    <property type="nucleotide sequence ID" value="NM_022458.3"/>
</dbReference>
<dbReference type="RefSeq" id="XP_016867996.1">
    <property type="nucleotide sequence ID" value="XM_017012507.1"/>
</dbReference>
<dbReference type="SMR" id="Q8WVP7"/>
<dbReference type="BioGRID" id="122137">
    <property type="interactions" value="91"/>
</dbReference>
<dbReference type="FunCoup" id="Q8WVP7">
    <property type="interactions" value="3209"/>
</dbReference>
<dbReference type="IntAct" id="Q8WVP7">
    <property type="interactions" value="66"/>
</dbReference>
<dbReference type="MINT" id="Q8WVP7"/>
<dbReference type="STRING" id="9606.ENSP00000326604"/>
<dbReference type="iPTMnet" id="Q8WVP7"/>
<dbReference type="PhosphoSitePlus" id="Q8WVP7"/>
<dbReference type="BioMuta" id="LMBR1"/>
<dbReference type="DMDM" id="74730878"/>
<dbReference type="jPOST" id="Q8WVP7"/>
<dbReference type="MassIVE" id="Q8WVP7"/>
<dbReference type="PaxDb" id="9606-ENSP00000326604"/>
<dbReference type="PeptideAtlas" id="Q8WVP7"/>
<dbReference type="ProteomicsDB" id="74810">
    <molecule id="Q8WVP7-1"/>
</dbReference>
<dbReference type="ProteomicsDB" id="74811">
    <molecule id="Q8WVP7-2"/>
</dbReference>
<dbReference type="ProteomicsDB" id="74812">
    <molecule id="Q8WVP7-3"/>
</dbReference>
<dbReference type="Pumba" id="Q8WVP7"/>
<dbReference type="Antibodypedia" id="18896">
    <property type="antibodies" value="145 antibodies from 22 providers"/>
</dbReference>
<dbReference type="DNASU" id="64327"/>
<dbReference type="Ensembl" id="ENST00000353442.10">
    <molecule id="Q8WVP7-1"/>
    <property type="protein sequence ID" value="ENSP00000326604.7"/>
    <property type="gene ID" value="ENSG00000105983.23"/>
</dbReference>
<dbReference type="GeneID" id="64327"/>
<dbReference type="KEGG" id="hsa:64327"/>
<dbReference type="MANE-Select" id="ENST00000353442.10">
    <property type="protein sequence ID" value="ENSP00000326604.7"/>
    <property type="RefSeq nucleotide sequence ID" value="NM_022458.4"/>
    <property type="RefSeq protein sequence ID" value="NP_071903.2"/>
</dbReference>
<dbReference type="UCSC" id="uc003wmw.5">
    <molecule id="Q8WVP7-1"/>
    <property type="organism name" value="human"/>
</dbReference>
<dbReference type="AGR" id="HGNC:13243"/>
<dbReference type="CTD" id="64327"/>
<dbReference type="DisGeNET" id="64327"/>
<dbReference type="GeneCards" id="LMBR1"/>
<dbReference type="HGNC" id="HGNC:13243">
    <property type="gene designation" value="LMBR1"/>
</dbReference>
<dbReference type="HPA" id="ENSG00000105983">
    <property type="expression patterns" value="Low tissue specificity"/>
</dbReference>
<dbReference type="MalaCards" id="LMBR1"/>
<dbReference type="MIM" id="135750">
    <property type="type" value="phenotype"/>
</dbReference>
<dbReference type="MIM" id="174500">
    <property type="type" value="phenotype"/>
</dbReference>
<dbReference type="MIM" id="186200">
    <property type="type" value="phenotype"/>
</dbReference>
<dbReference type="MIM" id="188740">
    <property type="type" value="phenotype"/>
</dbReference>
<dbReference type="MIM" id="190605">
    <property type="type" value="phenotype"/>
</dbReference>
<dbReference type="MIM" id="200500">
    <property type="type" value="phenotype"/>
</dbReference>
<dbReference type="MIM" id="605522">
    <property type="type" value="gene"/>
</dbReference>
<dbReference type="neXtProt" id="NX_Q8WVP7"/>
<dbReference type="OpenTargets" id="ENSG00000105983"/>
<dbReference type="Orphanet" id="931">
    <property type="disease" value="Isolated acheiropodia"/>
</dbReference>
<dbReference type="Orphanet" id="93321">
    <property type="disease" value="Isolated radial hemimelia"/>
</dbReference>
<dbReference type="Orphanet" id="2378">
    <property type="disease" value="Laurin-Sandrow syndrome"/>
</dbReference>
<dbReference type="Orphanet" id="93336">
    <property type="disease" value="Polydactyly of a triphalangeal thumb"/>
</dbReference>
<dbReference type="Orphanet" id="93405">
    <property type="disease" value="Syndactyly type 4"/>
</dbReference>
<dbReference type="Orphanet" id="988">
    <property type="disease" value="Tibial hemimelia-polysyndactyly-triphalangeal thumb syndrome"/>
</dbReference>
<dbReference type="PharmGKB" id="PA25945"/>
<dbReference type="VEuPathDB" id="HostDB:ENSG00000105983"/>
<dbReference type="eggNOG" id="KOG3722">
    <property type="taxonomic scope" value="Eukaryota"/>
</dbReference>
<dbReference type="GeneTree" id="ENSGT00390000007809"/>
<dbReference type="HOGENOM" id="CLU_029445_1_0_1"/>
<dbReference type="InParanoid" id="Q8WVP7"/>
<dbReference type="OMA" id="KSYYIQW"/>
<dbReference type="OrthoDB" id="5596951at2759"/>
<dbReference type="PAN-GO" id="Q8WVP7">
    <property type="GO annotations" value="3 GO annotations based on evolutionary models"/>
</dbReference>
<dbReference type="PhylomeDB" id="Q8WVP7"/>
<dbReference type="TreeFam" id="TF313485"/>
<dbReference type="PathwayCommons" id="Q8WVP7"/>
<dbReference type="SignaLink" id="Q8WVP7"/>
<dbReference type="BioGRID-ORCS" id="64327">
    <property type="hits" value="7 hits in 1154 CRISPR screens"/>
</dbReference>
<dbReference type="ChiTaRS" id="LMBR1">
    <property type="organism name" value="human"/>
</dbReference>
<dbReference type="GeneWiki" id="LMBR1"/>
<dbReference type="GenomeRNAi" id="64327"/>
<dbReference type="Pharos" id="Q8WVP7">
    <property type="development level" value="Tbio"/>
</dbReference>
<dbReference type="PRO" id="PR:Q8WVP7"/>
<dbReference type="Proteomes" id="UP000005640">
    <property type="component" value="Chromosome 7"/>
</dbReference>
<dbReference type="RNAct" id="Q8WVP7">
    <property type="molecule type" value="protein"/>
</dbReference>
<dbReference type="Bgee" id="ENSG00000105983">
    <property type="expression patterns" value="Expressed in adrenal tissue and 180 other cell types or tissues"/>
</dbReference>
<dbReference type="ExpressionAtlas" id="Q8WVP7">
    <property type="expression patterns" value="baseline and differential"/>
</dbReference>
<dbReference type="GO" id="GO:0005886">
    <property type="term" value="C:plasma membrane"/>
    <property type="evidence" value="ECO:0000318"/>
    <property type="project" value="GO_Central"/>
</dbReference>
<dbReference type="GO" id="GO:0004888">
    <property type="term" value="F:transmembrane signaling receptor activity"/>
    <property type="evidence" value="ECO:0000318"/>
    <property type="project" value="GO_Central"/>
</dbReference>
<dbReference type="GO" id="GO:0042733">
    <property type="term" value="P:embryonic digit morphogenesis"/>
    <property type="evidence" value="ECO:0007669"/>
    <property type="project" value="Ensembl"/>
</dbReference>
<dbReference type="GO" id="GO:0007165">
    <property type="term" value="P:signal transduction"/>
    <property type="evidence" value="ECO:0000318"/>
    <property type="project" value="GO_Central"/>
</dbReference>
<dbReference type="InterPro" id="IPR008075">
    <property type="entry name" value="LIMR"/>
</dbReference>
<dbReference type="InterPro" id="IPR006876">
    <property type="entry name" value="LMBR1-like_membr_prot"/>
</dbReference>
<dbReference type="PANTHER" id="PTHR12625:SF1">
    <property type="entry name" value="LIMB REGION 1 PROTEIN HOMOLOG"/>
    <property type="match status" value="1"/>
</dbReference>
<dbReference type="PANTHER" id="PTHR12625">
    <property type="entry name" value="LIPOCALIN-1 INTERACTING MEMBRANE RECEPTOR LIMR"/>
    <property type="match status" value="1"/>
</dbReference>
<dbReference type="Pfam" id="PF04791">
    <property type="entry name" value="LMBR1"/>
    <property type="match status" value="2"/>
</dbReference>
<dbReference type="PRINTS" id="PR01692">
    <property type="entry name" value="LIPOCALINIMR"/>
</dbReference>